<comment type="function">
    <text evidence="1">Probably participates in a plant defense mechanism.</text>
</comment>
<comment type="domain">
    <text evidence="4">The presence of a 'disulfide through disulfide knot' structurally defines this protein as a knottin.</text>
</comment>
<comment type="PTM">
    <text evidence="1 2">This is a cyclic peptide.</text>
</comment>
<comment type="mass spectrometry"/>
<comment type="similarity">
    <text evidence="1">Belongs to the cyclotide family. Moebius subfamily.</text>
</comment>
<comment type="caution">
    <text evidence="1">This peptide is cyclic. The start position was chosen by similarity to Oak1 (kalata B1) for which the DNA sequence is known.</text>
</comment>
<keyword id="KW-0903">Direct protein sequencing</keyword>
<keyword id="KW-1015">Disulfide bond</keyword>
<keyword id="KW-0960">Knottin</keyword>
<keyword id="KW-0611">Plant defense</keyword>
<name>CYPLE_PSYLE</name>
<proteinExistence type="evidence at protein level"/>
<feature type="peptide" id="PRO_0000441796" description="Cyclotide psyleio E" evidence="2">
    <location>
        <begin position="1"/>
        <end position="30"/>
    </location>
</feature>
<feature type="disulfide bond" evidence="1">
    <location>
        <begin position="7"/>
        <end position="21"/>
    </location>
</feature>
<feature type="disulfide bond" evidence="1">
    <location>
        <begin position="11"/>
        <end position="23"/>
    </location>
</feature>
<feature type="disulfide bond" evidence="1">
    <location>
        <begin position="16"/>
        <end position="28"/>
    </location>
</feature>
<feature type="cross-link" description="Cyclopeptide (Ser-Lys)" evidence="5">
    <location>
        <begin position="1"/>
        <end position="30"/>
    </location>
</feature>
<feature type="unsure residue" description="I or L" evidence="3">
    <location>
        <position position="5"/>
    </location>
</feature>
<feature type="unsure residue" description="I or L" evidence="3">
    <location>
        <position position="27"/>
    </location>
</feature>
<dbReference type="SMR" id="C0HL31"/>
<dbReference type="GO" id="GO:0006952">
    <property type="term" value="P:defense response"/>
    <property type="evidence" value="ECO:0007669"/>
    <property type="project" value="UniProtKB-KW"/>
</dbReference>
<dbReference type="InterPro" id="IPR005535">
    <property type="entry name" value="Cyclotide"/>
</dbReference>
<dbReference type="InterPro" id="IPR012324">
    <property type="entry name" value="Cyclotide_moebius_CS"/>
</dbReference>
<dbReference type="InterPro" id="IPR036146">
    <property type="entry name" value="Cyclotide_sf"/>
</dbReference>
<dbReference type="Pfam" id="PF03784">
    <property type="entry name" value="Cyclotide"/>
    <property type="match status" value="1"/>
</dbReference>
<dbReference type="SUPFAM" id="SSF57038">
    <property type="entry name" value="Cyclotides"/>
    <property type="match status" value="1"/>
</dbReference>
<dbReference type="PROSITE" id="PS51052">
    <property type="entry name" value="CYCLOTIDE"/>
    <property type="match status" value="1"/>
</dbReference>
<dbReference type="PROSITE" id="PS60009">
    <property type="entry name" value="CYCLOTIDE_MOEBIUS"/>
    <property type="match status" value="1"/>
</dbReference>
<sequence>SVTPIVCGETCFGGTCNTPGCSCSWPICTK</sequence>
<accession>C0HL31</accession>
<organism>
    <name type="scientific">Psychotria leiocarpa</name>
    <dbReference type="NCBI Taxonomy" id="2022332"/>
    <lineage>
        <taxon>Eukaryota</taxon>
        <taxon>Viridiplantae</taxon>
        <taxon>Streptophyta</taxon>
        <taxon>Embryophyta</taxon>
        <taxon>Tracheophyta</taxon>
        <taxon>Spermatophyta</taxon>
        <taxon>Magnoliopsida</taxon>
        <taxon>eudicotyledons</taxon>
        <taxon>Gunneridae</taxon>
        <taxon>Pentapetalae</taxon>
        <taxon>asterids</taxon>
        <taxon>lamiids</taxon>
        <taxon>Gentianales</taxon>
        <taxon>Rubiaceae</taxon>
        <taxon>Rubioideae</taxon>
        <taxon>Psychotrieae</taxon>
        <taxon>Psychotria</taxon>
    </lineage>
</organism>
<evidence type="ECO:0000255" key="1">
    <source>
        <dbReference type="PROSITE-ProRule" id="PRU00395"/>
    </source>
</evidence>
<evidence type="ECO:0000269" key="2">
    <source>
    </source>
</evidence>
<evidence type="ECO:0000303" key="3">
    <source>
    </source>
</evidence>
<evidence type="ECO:0000305" key="4"/>
<evidence type="ECO:0000305" key="5">
    <source>
    </source>
</evidence>
<protein>
    <recommendedName>
        <fullName evidence="3">Cyclotide psyleio E</fullName>
    </recommendedName>
</protein>
<reference evidence="4" key="1">
    <citation type="journal article" date="2016" name="J. Nat. Prod.">
        <title>Isolation and Characterization of Cyclotides from Brazilian Psychotria: Significance in Plant Defense and Co-occurrence with Antioxidant Alkaloids.</title>
        <authorList>
            <person name="Matsuura H.N."/>
            <person name="Poth A.G."/>
            <person name="Yendo A.C."/>
            <person name="Fett-Neto A.G."/>
            <person name="Craik D.J."/>
        </authorList>
    </citation>
    <scope>PROTEIN SEQUENCE</scope>
    <scope>MASS SPECTROMETRY</scope>
    <scope>IDENTIFICATION BY MASS SPECTROMETRY</scope>
    <scope>CYCLIZATION</scope>
    <source>
        <tissue evidence="3">Leaf</tissue>
    </source>
</reference>